<feature type="chain" id="PRO_1000001795" description="Phosphate acyltransferase">
    <location>
        <begin position="1"/>
        <end position="332"/>
    </location>
</feature>
<name>PLSX_NITSB</name>
<dbReference type="EC" id="2.3.1.274" evidence="1"/>
<dbReference type="EMBL" id="AP009178">
    <property type="protein sequence ID" value="BAF69512.1"/>
    <property type="molecule type" value="Genomic_DNA"/>
</dbReference>
<dbReference type="RefSeq" id="WP_012081775.1">
    <property type="nucleotide sequence ID" value="NC_009662.1"/>
</dbReference>
<dbReference type="SMR" id="A6Q203"/>
<dbReference type="FunCoup" id="A6Q203">
    <property type="interactions" value="262"/>
</dbReference>
<dbReference type="STRING" id="387092.NIS_0398"/>
<dbReference type="KEGG" id="nis:NIS_0398"/>
<dbReference type="eggNOG" id="COG0416">
    <property type="taxonomic scope" value="Bacteria"/>
</dbReference>
<dbReference type="HOGENOM" id="CLU_039379_1_1_7"/>
<dbReference type="InParanoid" id="A6Q203"/>
<dbReference type="OrthoDB" id="9806408at2"/>
<dbReference type="UniPathway" id="UPA00085"/>
<dbReference type="Proteomes" id="UP000001118">
    <property type="component" value="Chromosome"/>
</dbReference>
<dbReference type="GO" id="GO:0005737">
    <property type="term" value="C:cytoplasm"/>
    <property type="evidence" value="ECO:0007669"/>
    <property type="project" value="UniProtKB-SubCell"/>
</dbReference>
<dbReference type="GO" id="GO:0043811">
    <property type="term" value="F:phosphate:acyl-[acyl carrier protein] acyltransferase activity"/>
    <property type="evidence" value="ECO:0007669"/>
    <property type="project" value="UniProtKB-UniRule"/>
</dbReference>
<dbReference type="GO" id="GO:0006633">
    <property type="term" value="P:fatty acid biosynthetic process"/>
    <property type="evidence" value="ECO:0007669"/>
    <property type="project" value="UniProtKB-UniRule"/>
</dbReference>
<dbReference type="GO" id="GO:0008654">
    <property type="term" value="P:phospholipid biosynthetic process"/>
    <property type="evidence" value="ECO:0007669"/>
    <property type="project" value="UniProtKB-KW"/>
</dbReference>
<dbReference type="Gene3D" id="3.40.718.10">
    <property type="entry name" value="Isopropylmalate Dehydrogenase"/>
    <property type="match status" value="1"/>
</dbReference>
<dbReference type="HAMAP" id="MF_00019">
    <property type="entry name" value="PlsX"/>
    <property type="match status" value="1"/>
</dbReference>
<dbReference type="InterPro" id="IPR003664">
    <property type="entry name" value="FA_synthesis"/>
</dbReference>
<dbReference type="InterPro" id="IPR012281">
    <property type="entry name" value="Phospholipid_synth_PlsX-like"/>
</dbReference>
<dbReference type="NCBIfam" id="TIGR00182">
    <property type="entry name" value="plsX"/>
    <property type="match status" value="1"/>
</dbReference>
<dbReference type="PANTHER" id="PTHR30100">
    <property type="entry name" value="FATTY ACID/PHOSPHOLIPID SYNTHESIS PROTEIN PLSX"/>
    <property type="match status" value="1"/>
</dbReference>
<dbReference type="PANTHER" id="PTHR30100:SF1">
    <property type="entry name" value="PHOSPHATE ACYLTRANSFERASE"/>
    <property type="match status" value="1"/>
</dbReference>
<dbReference type="Pfam" id="PF02504">
    <property type="entry name" value="FA_synthesis"/>
    <property type="match status" value="1"/>
</dbReference>
<dbReference type="PIRSF" id="PIRSF002465">
    <property type="entry name" value="Phsphlp_syn_PlsX"/>
    <property type="match status" value="1"/>
</dbReference>
<dbReference type="SUPFAM" id="SSF53659">
    <property type="entry name" value="Isocitrate/Isopropylmalate dehydrogenase-like"/>
    <property type="match status" value="1"/>
</dbReference>
<keyword id="KW-0963">Cytoplasm</keyword>
<keyword id="KW-0444">Lipid biosynthesis</keyword>
<keyword id="KW-0443">Lipid metabolism</keyword>
<keyword id="KW-0594">Phospholipid biosynthesis</keyword>
<keyword id="KW-1208">Phospholipid metabolism</keyword>
<keyword id="KW-1185">Reference proteome</keyword>
<keyword id="KW-0808">Transferase</keyword>
<reference key="1">
    <citation type="journal article" date="2007" name="Proc. Natl. Acad. Sci. U.S.A.">
        <title>Deep-sea vent epsilon-proteobacterial genomes provide insights into emergence of pathogens.</title>
        <authorList>
            <person name="Nakagawa S."/>
            <person name="Takaki Y."/>
            <person name="Shimamura S."/>
            <person name="Reysenbach A.-L."/>
            <person name="Takai K."/>
            <person name="Horikoshi K."/>
        </authorList>
    </citation>
    <scope>NUCLEOTIDE SEQUENCE [LARGE SCALE GENOMIC DNA]</scope>
    <source>
        <strain>SB155-2</strain>
    </source>
</reference>
<sequence>MVRIAVDAMGGDFGPYPIIEGTILALKENPNFKAILVGHKEKIQTLIPHKYNNRIEIVHAEDVIRMDEAATEALKRKESSIYKAVELVRTGEAEGVVSAGHSGATMSLATLRIGRLKNVSRPAIATLMPTYKNKKSLVLDVGANVDCKPEHLFEFGVMGEAYATAIMNVDKPKVGLLSNGEEETKGNELTKNAFTMLKSLPTFIGNVEGNNIFDGSVDVIVCDGFTGNIVLKTSEGVADAISKLMKANIKKTPIRMAGALMMKKVFRSLKKEIDYSEYGGAPLIGVKGCTIISHGKSTPKAIKNAIYQAITYIKSDINTKIEKRLEEVTPKG</sequence>
<proteinExistence type="inferred from homology"/>
<evidence type="ECO:0000255" key="1">
    <source>
        <dbReference type="HAMAP-Rule" id="MF_00019"/>
    </source>
</evidence>
<organism>
    <name type="scientific">Nitratiruptor sp. (strain SB155-2)</name>
    <dbReference type="NCBI Taxonomy" id="387092"/>
    <lineage>
        <taxon>Bacteria</taxon>
        <taxon>Pseudomonadati</taxon>
        <taxon>Campylobacterota</taxon>
        <taxon>Epsilonproteobacteria</taxon>
        <taxon>Nautiliales</taxon>
        <taxon>Nitratiruptoraceae</taxon>
        <taxon>Nitratiruptor</taxon>
    </lineage>
</organism>
<comment type="function">
    <text evidence="1">Catalyzes the reversible formation of acyl-phosphate (acyl-PO(4)) from acyl-[acyl-carrier-protein] (acyl-ACP). This enzyme utilizes acyl-ACP as fatty acyl donor, but not acyl-CoA.</text>
</comment>
<comment type="catalytic activity">
    <reaction evidence="1">
        <text>a fatty acyl-[ACP] + phosphate = an acyl phosphate + holo-[ACP]</text>
        <dbReference type="Rhea" id="RHEA:42292"/>
        <dbReference type="Rhea" id="RHEA-COMP:9685"/>
        <dbReference type="Rhea" id="RHEA-COMP:14125"/>
        <dbReference type="ChEBI" id="CHEBI:43474"/>
        <dbReference type="ChEBI" id="CHEBI:59918"/>
        <dbReference type="ChEBI" id="CHEBI:64479"/>
        <dbReference type="ChEBI" id="CHEBI:138651"/>
        <dbReference type="EC" id="2.3.1.274"/>
    </reaction>
</comment>
<comment type="pathway">
    <text evidence="1">Lipid metabolism; phospholipid metabolism.</text>
</comment>
<comment type="subunit">
    <text evidence="1">Homodimer. Probably interacts with PlsY.</text>
</comment>
<comment type="subcellular location">
    <subcellularLocation>
        <location evidence="1">Cytoplasm</location>
    </subcellularLocation>
    <text evidence="1">Associated with the membrane possibly through PlsY.</text>
</comment>
<comment type="similarity">
    <text evidence="1">Belongs to the PlsX family.</text>
</comment>
<accession>A6Q203</accession>
<gene>
    <name evidence="1" type="primary">plsX</name>
    <name type="ordered locus">NIS_0398</name>
</gene>
<protein>
    <recommendedName>
        <fullName evidence="1">Phosphate acyltransferase</fullName>
        <ecNumber evidence="1">2.3.1.274</ecNumber>
    </recommendedName>
    <alternativeName>
        <fullName evidence="1">Acyl-ACP phosphotransacylase</fullName>
    </alternativeName>
    <alternativeName>
        <fullName evidence="1">Acyl-[acyl-carrier-protein]--phosphate acyltransferase</fullName>
    </alternativeName>
    <alternativeName>
        <fullName evidence="1">Phosphate-acyl-ACP acyltransferase</fullName>
    </alternativeName>
</protein>